<gene>
    <name evidence="1" type="primary">miaB</name>
    <name type="ordered locus">SeD_A0776</name>
</gene>
<dbReference type="EC" id="2.8.4.3" evidence="1"/>
<dbReference type="EMBL" id="CP001144">
    <property type="protein sequence ID" value="ACH77340.1"/>
    <property type="molecule type" value="Genomic_DNA"/>
</dbReference>
<dbReference type="RefSeq" id="WP_001519200.1">
    <property type="nucleotide sequence ID" value="NC_011205.1"/>
</dbReference>
<dbReference type="SMR" id="B5FNB2"/>
<dbReference type="KEGG" id="sed:SeD_A0776"/>
<dbReference type="HOGENOM" id="CLU_018697_2_0_6"/>
<dbReference type="Proteomes" id="UP000008322">
    <property type="component" value="Chromosome"/>
</dbReference>
<dbReference type="GO" id="GO:0005829">
    <property type="term" value="C:cytosol"/>
    <property type="evidence" value="ECO:0007669"/>
    <property type="project" value="TreeGrafter"/>
</dbReference>
<dbReference type="GO" id="GO:0051539">
    <property type="term" value="F:4 iron, 4 sulfur cluster binding"/>
    <property type="evidence" value="ECO:0007669"/>
    <property type="project" value="UniProtKB-UniRule"/>
</dbReference>
<dbReference type="GO" id="GO:0046872">
    <property type="term" value="F:metal ion binding"/>
    <property type="evidence" value="ECO:0007669"/>
    <property type="project" value="UniProtKB-KW"/>
</dbReference>
<dbReference type="GO" id="GO:0035597">
    <property type="term" value="F:N6-isopentenyladenosine methylthiotransferase activity"/>
    <property type="evidence" value="ECO:0007669"/>
    <property type="project" value="TreeGrafter"/>
</dbReference>
<dbReference type="CDD" id="cd01335">
    <property type="entry name" value="Radical_SAM"/>
    <property type="match status" value="1"/>
</dbReference>
<dbReference type="FunFam" id="3.40.50.12160:FF:000001">
    <property type="entry name" value="tRNA-2-methylthio-N(6)-dimethylallyladenosine synthase"/>
    <property type="match status" value="1"/>
</dbReference>
<dbReference type="FunFam" id="3.80.30.20:FF:000001">
    <property type="entry name" value="tRNA-2-methylthio-N(6)-dimethylallyladenosine synthase 2"/>
    <property type="match status" value="1"/>
</dbReference>
<dbReference type="Gene3D" id="3.40.50.12160">
    <property type="entry name" value="Methylthiotransferase, N-terminal domain"/>
    <property type="match status" value="1"/>
</dbReference>
<dbReference type="Gene3D" id="3.80.30.20">
    <property type="entry name" value="tm_1862 like domain"/>
    <property type="match status" value="1"/>
</dbReference>
<dbReference type="HAMAP" id="MF_01864">
    <property type="entry name" value="tRNA_metthiotr_MiaB"/>
    <property type="match status" value="1"/>
</dbReference>
<dbReference type="InterPro" id="IPR006638">
    <property type="entry name" value="Elp3/MiaA/NifB-like_rSAM"/>
</dbReference>
<dbReference type="InterPro" id="IPR005839">
    <property type="entry name" value="Methylthiotransferase"/>
</dbReference>
<dbReference type="InterPro" id="IPR020612">
    <property type="entry name" value="Methylthiotransferase_CS"/>
</dbReference>
<dbReference type="InterPro" id="IPR013848">
    <property type="entry name" value="Methylthiotransferase_N"/>
</dbReference>
<dbReference type="InterPro" id="IPR038135">
    <property type="entry name" value="Methylthiotransferase_N_sf"/>
</dbReference>
<dbReference type="InterPro" id="IPR006463">
    <property type="entry name" value="MiaB_methiolase"/>
</dbReference>
<dbReference type="InterPro" id="IPR007197">
    <property type="entry name" value="rSAM"/>
</dbReference>
<dbReference type="InterPro" id="IPR023404">
    <property type="entry name" value="rSAM_horseshoe"/>
</dbReference>
<dbReference type="InterPro" id="IPR002792">
    <property type="entry name" value="TRAM_dom"/>
</dbReference>
<dbReference type="NCBIfam" id="TIGR01574">
    <property type="entry name" value="miaB-methiolase"/>
    <property type="match status" value="1"/>
</dbReference>
<dbReference type="NCBIfam" id="TIGR00089">
    <property type="entry name" value="MiaB/RimO family radical SAM methylthiotransferase"/>
    <property type="match status" value="1"/>
</dbReference>
<dbReference type="PANTHER" id="PTHR43020">
    <property type="entry name" value="CDK5 REGULATORY SUBUNIT-ASSOCIATED PROTEIN 1"/>
    <property type="match status" value="1"/>
</dbReference>
<dbReference type="PANTHER" id="PTHR43020:SF2">
    <property type="entry name" value="MITOCHONDRIAL TRNA METHYLTHIOTRANSFERASE CDK5RAP1"/>
    <property type="match status" value="1"/>
</dbReference>
<dbReference type="Pfam" id="PF04055">
    <property type="entry name" value="Radical_SAM"/>
    <property type="match status" value="1"/>
</dbReference>
<dbReference type="Pfam" id="PF01938">
    <property type="entry name" value="TRAM"/>
    <property type="match status" value="1"/>
</dbReference>
<dbReference type="Pfam" id="PF00919">
    <property type="entry name" value="UPF0004"/>
    <property type="match status" value="1"/>
</dbReference>
<dbReference type="SFLD" id="SFLDF00273">
    <property type="entry name" value="(dimethylallyl)adenosine_tRNA"/>
    <property type="match status" value="1"/>
</dbReference>
<dbReference type="SFLD" id="SFLDG01082">
    <property type="entry name" value="B12-binding_domain_containing"/>
    <property type="match status" value="1"/>
</dbReference>
<dbReference type="SFLD" id="SFLDS00029">
    <property type="entry name" value="Radical_SAM"/>
    <property type="match status" value="1"/>
</dbReference>
<dbReference type="SMART" id="SM00729">
    <property type="entry name" value="Elp3"/>
    <property type="match status" value="1"/>
</dbReference>
<dbReference type="SUPFAM" id="SSF102114">
    <property type="entry name" value="Radical SAM enzymes"/>
    <property type="match status" value="1"/>
</dbReference>
<dbReference type="PROSITE" id="PS51449">
    <property type="entry name" value="MTTASE_N"/>
    <property type="match status" value="1"/>
</dbReference>
<dbReference type="PROSITE" id="PS01278">
    <property type="entry name" value="MTTASE_RADICAL"/>
    <property type="match status" value="1"/>
</dbReference>
<dbReference type="PROSITE" id="PS51918">
    <property type="entry name" value="RADICAL_SAM"/>
    <property type="match status" value="1"/>
</dbReference>
<dbReference type="PROSITE" id="PS50926">
    <property type="entry name" value="TRAM"/>
    <property type="match status" value="1"/>
</dbReference>
<organism>
    <name type="scientific">Salmonella dublin (strain CT_02021853)</name>
    <dbReference type="NCBI Taxonomy" id="439851"/>
    <lineage>
        <taxon>Bacteria</taxon>
        <taxon>Pseudomonadati</taxon>
        <taxon>Pseudomonadota</taxon>
        <taxon>Gammaproteobacteria</taxon>
        <taxon>Enterobacterales</taxon>
        <taxon>Enterobacteriaceae</taxon>
        <taxon>Salmonella</taxon>
    </lineage>
</organism>
<keyword id="KW-0004">4Fe-4S</keyword>
<keyword id="KW-0963">Cytoplasm</keyword>
<keyword id="KW-0408">Iron</keyword>
<keyword id="KW-0411">Iron-sulfur</keyword>
<keyword id="KW-0479">Metal-binding</keyword>
<keyword id="KW-0949">S-adenosyl-L-methionine</keyword>
<keyword id="KW-0808">Transferase</keyword>
<keyword id="KW-0819">tRNA processing</keyword>
<proteinExistence type="inferred from homology"/>
<protein>
    <recommendedName>
        <fullName evidence="1">tRNA-2-methylthio-N(6)-dimethylallyladenosine synthase</fullName>
        <ecNumber evidence="1">2.8.4.3</ecNumber>
    </recommendedName>
    <alternativeName>
        <fullName evidence="1">(Dimethylallyl)adenosine tRNA methylthiotransferase MiaB</fullName>
    </alternativeName>
    <alternativeName>
        <fullName evidence="1">tRNA-i(6)A37 methylthiotransferase</fullName>
    </alternativeName>
</protein>
<sequence>MTKKLHIKTWGCQMNEYDSSKMADLLDATHGYQLTDVAEEADVLLLNTCSIREKAQEKVFHQLGRWRLLKEKNPDLIIGVGGCVASQEGEHIRQRAHYVDIIFGPQTLHRLPEMINSVRGDRSPVVDISFPEIEKFDRLPEPRAEGPTAFVSIMEGCNKYCTYCVVPYTRGEEVSRPSDDILFEIAQLAAQGVREVNLLGQNVNAWRGENYDGTTGTFADLLRLVAAIDGIDRIRFTTSHPIEFTDDIIEVYRDTPELVSFLHLPVQSGSDRVLNLMGRTHTALEYKAIIRKLRAARPDIQISSDFIVGFPGETTDDFEKTMKLIADVNFDMSYSFIFSARPGTPAADMVDDVPEEEKKQRLYILQERINQQAMAWSRRMLGTTQRILVEGTSRKNIMELSGRTENNRVVNFEGTPEMIGKFVDVEITDVYPNSLRGKVVRTEDEMGLRVAETPESVIARTRKENELGVGFYQP</sequence>
<evidence type="ECO:0000255" key="1">
    <source>
        <dbReference type="HAMAP-Rule" id="MF_01864"/>
    </source>
</evidence>
<evidence type="ECO:0000255" key="2">
    <source>
        <dbReference type="PROSITE-ProRule" id="PRU01266"/>
    </source>
</evidence>
<reference key="1">
    <citation type="journal article" date="2011" name="J. Bacteriol.">
        <title>Comparative genomics of 28 Salmonella enterica isolates: evidence for CRISPR-mediated adaptive sublineage evolution.</title>
        <authorList>
            <person name="Fricke W.F."/>
            <person name="Mammel M.K."/>
            <person name="McDermott P.F."/>
            <person name="Tartera C."/>
            <person name="White D.G."/>
            <person name="Leclerc J.E."/>
            <person name="Ravel J."/>
            <person name="Cebula T.A."/>
        </authorList>
    </citation>
    <scope>NUCLEOTIDE SEQUENCE [LARGE SCALE GENOMIC DNA]</scope>
    <source>
        <strain>CT_02021853</strain>
    </source>
</reference>
<accession>B5FNB2</accession>
<name>MIAB_SALDC</name>
<comment type="function">
    <text evidence="1">Catalyzes the methylthiolation of N6-(dimethylallyl)adenosine (i(6)A), leading to the formation of 2-methylthio-N6-(dimethylallyl)adenosine (ms(2)i(6)A) at position 37 in tRNAs that read codons beginning with uridine.</text>
</comment>
<comment type="catalytic activity">
    <reaction evidence="1">
        <text>N(6)-dimethylallyladenosine(37) in tRNA + (sulfur carrier)-SH + AH2 + 2 S-adenosyl-L-methionine = 2-methylsulfanyl-N(6)-dimethylallyladenosine(37) in tRNA + (sulfur carrier)-H + 5'-deoxyadenosine + L-methionine + A + S-adenosyl-L-homocysteine + 2 H(+)</text>
        <dbReference type="Rhea" id="RHEA:37067"/>
        <dbReference type="Rhea" id="RHEA-COMP:10375"/>
        <dbReference type="Rhea" id="RHEA-COMP:10376"/>
        <dbReference type="Rhea" id="RHEA-COMP:14737"/>
        <dbReference type="Rhea" id="RHEA-COMP:14739"/>
        <dbReference type="ChEBI" id="CHEBI:13193"/>
        <dbReference type="ChEBI" id="CHEBI:15378"/>
        <dbReference type="ChEBI" id="CHEBI:17319"/>
        <dbReference type="ChEBI" id="CHEBI:17499"/>
        <dbReference type="ChEBI" id="CHEBI:29917"/>
        <dbReference type="ChEBI" id="CHEBI:57844"/>
        <dbReference type="ChEBI" id="CHEBI:57856"/>
        <dbReference type="ChEBI" id="CHEBI:59789"/>
        <dbReference type="ChEBI" id="CHEBI:64428"/>
        <dbReference type="ChEBI" id="CHEBI:74415"/>
        <dbReference type="ChEBI" id="CHEBI:74417"/>
        <dbReference type="EC" id="2.8.4.3"/>
    </reaction>
</comment>
<comment type="cofactor">
    <cofactor evidence="1">
        <name>[4Fe-4S] cluster</name>
        <dbReference type="ChEBI" id="CHEBI:49883"/>
    </cofactor>
    <text evidence="1">Binds 2 [4Fe-4S] clusters. One cluster is coordinated with 3 cysteines and an exchangeable S-adenosyl-L-methionine.</text>
</comment>
<comment type="subunit">
    <text evidence="1">Monomer.</text>
</comment>
<comment type="subcellular location">
    <subcellularLocation>
        <location evidence="1">Cytoplasm</location>
    </subcellularLocation>
</comment>
<comment type="similarity">
    <text evidence="1">Belongs to the methylthiotransferase family. MiaB subfamily.</text>
</comment>
<feature type="chain" id="PRO_0000374522" description="tRNA-2-methylthio-N(6)-dimethylallyladenosine synthase">
    <location>
        <begin position="1"/>
        <end position="474"/>
    </location>
</feature>
<feature type="domain" description="MTTase N-terminal" evidence="1">
    <location>
        <begin position="3"/>
        <end position="120"/>
    </location>
</feature>
<feature type="domain" description="Radical SAM core" evidence="2">
    <location>
        <begin position="143"/>
        <end position="375"/>
    </location>
</feature>
<feature type="domain" description="TRAM" evidence="1">
    <location>
        <begin position="378"/>
        <end position="441"/>
    </location>
</feature>
<feature type="binding site" evidence="1">
    <location>
        <position position="12"/>
    </location>
    <ligand>
        <name>[4Fe-4S] cluster</name>
        <dbReference type="ChEBI" id="CHEBI:49883"/>
        <label>1</label>
    </ligand>
</feature>
<feature type="binding site" evidence="1">
    <location>
        <position position="49"/>
    </location>
    <ligand>
        <name>[4Fe-4S] cluster</name>
        <dbReference type="ChEBI" id="CHEBI:49883"/>
        <label>1</label>
    </ligand>
</feature>
<feature type="binding site" evidence="1">
    <location>
        <position position="83"/>
    </location>
    <ligand>
        <name>[4Fe-4S] cluster</name>
        <dbReference type="ChEBI" id="CHEBI:49883"/>
        <label>1</label>
    </ligand>
</feature>
<feature type="binding site" evidence="1">
    <location>
        <position position="157"/>
    </location>
    <ligand>
        <name>[4Fe-4S] cluster</name>
        <dbReference type="ChEBI" id="CHEBI:49883"/>
        <label>2</label>
        <note>4Fe-4S-S-AdoMet</note>
    </ligand>
</feature>
<feature type="binding site" evidence="1">
    <location>
        <position position="161"/>
    </location>
    <ligand>
        <name>[4Fe-4S] cluster</name>
        <dbReference type="ChEBI" id="CHEBI:49883"/>
        <label>2</label>
        <note>4Fe-4S-S-AdoMet</note>
    </ligand>
</feature>
<feature type="binding site" evidence="1">
    <location>
        <position position="164"/>
    </location>
    <ligand>
        <name>[4Fe-4S] cluster</name>
        <dbReference type="ChEBI" id="CHEBI:49883"/>
        <label>2</label>
        <note>4Fe-4S-S-AdoMet</note>
    </ligand>
</feature>